<dbReference type="EMBL" id="AK007689">
    <property type="protein sequence ID" value="BAB25192.1"/>
    <property type="molecule type" value="mRNA"/>
</dbReference>
<dbReference type="EMBL" id="AK011262">
    <property type="protein sequence ID" value="BAB27503.1"/>
    <property type="molecule type" value="mRNA"/>
</dbReference>
<dbReference type="EMBL" id="AK151083">
    <property type="protein sequence ID" value="BAE30096.1"/>
    <property type="molecule type" value="mRNA"/>
</dbReference>
<dbReference type="EMBL" id="BC058115">
    <property type="protein sequence ID" value="AAH58115.1"/>
    <property type="molecule type" value="mRNA"/>
</dbReference>
<dbReference type="CCDS" id="CCDS40673.1"/>
<dbReference type="RefSeq" id="NP_080743.1">
    <property type="nucleotide sequence ID" value="NM_026467.5"/>
</dbReference>
<dbReference type="PDB" id="7LS1">
    <property type="method" value="EM"/>
    <property type="resolution" value="3.30 A"/>
    <property type="chains" value="S3=1-84"/>
</dbReference>
<dbReference type="PDB" id="7LS2">
    <property type="method" value="EM"/>
    <property type="resolution" value="3.10 A"/>
    <property type="chains" value="S3=1-84"/>
</dbReference>
<dbReference type="PDBsum" id="7LS1"/>
<dbReference type="PDBsum" id="7LS2"/>
<dbReference type="EMDB" id="EMD-23500"/>
<dbReference type="EMDB" id="EMD-23501"/>
<dbReference type="SMR" id="Q6ZWY3"/>
<dbReference type="BioGRID" id="212553">
    <property type="interactions" value="16"/>
</dbReference>
<dbReference type="ComplexPortal" id="CPX-5261">
    <property type="entry name" value="40S cytosolic small ribosomal subunit"/>
</dbReference>
<dbReference type="FunCoup" id="Q6ZWY3">
    <property type="interactions" value="2055"/>
</dbReference>
<dbReference type="IntAct" id="Q6ZWY3">
    <property type="interactions" value="3"/>
</dbReference>
<dbReference type="MINT" id="Q6ZWY3"/>
<dbReference type="GlyGen" id="Q6ZWY3">
    <property type="glycosylation" value="1 site, 1 O-linked glycan (1 site)"/>
</dbReference>
<dbReference type="iPTMnet" id="Q6ZWY3"/>
<dbReference type="PhosphoSitePlus" id="Q6ZWY3"/>
<dbReference type="SwissPalm" id="Q6ZWY3"/>
<dbReference type="jPOST" id="Q6ZWY3"/>
<dbReference type="PaxDb" id="10090-ENSMUSP00000046016"/>
<dbReference type="PeptideAtlas" id="Q6ZWY3"/>
<dbReference type="ProteomicsDB" id="261004"/>
<dbReference type="Pumba" id="Q6ZWY3"/>
<dbReference type="TopDownProteomics" id="Q6ZWY3"/>
<dbReference type="DNASU" id="67941"/>
<dbReference type="Ensembl" id="ENSMUST00000040917.14">
    <property type="protein sequence ID" value="ENSMUSP00000046016.8"/>
    <property type="gene ID" value="ENSMUSG00000036781.14"/>
</dbReference>
<dbReference type="GeneID" id="67941"/>
<dbReference type="KEGG" id="mmu:67941"/>
<dbReference type="UCSC" id="uc009qfm.1">
    <property type="organism name" value="mouse"/>
</dbReference>
<dbReference type="AGR" id="MGI:1915191"/>
<dbReference type="CTD" id="51065"/>
<dbReference type="MGI" id="MGI:1915191">
    <property type="gene designation" value="Rps27l"/>
</dbReference>
<dbReference type="VEuPathDB" id="HostDB:ENSMUSG00000036781"/>
<dbReference type="eggNOG" id="KOG1779">
    <property type="taxonomic scope" value="Eukaryota"/>
</dbReference>
<dbReference type="GeneTree" id="ENSGT00950000182891"/>
<dbReference type="HOGENOM" id="CLU_130128_3_0_1"/>
<dbReference type="InParanoid" id="Q6ZWY3"/>
<dbReference type="OMA" id="ERINMPL"/>
<dbReference type="OrthoDB" id="5567124at2759"/>
<dbReference type="PhylomeDB" id="Q6ZWY3"/>
<dbReference type="TreeFam" id="TF300265"/>
<dbReference type="Reactome" id="R-MMU-156827">
    <property type="pathway name" value="L13a-mediated translational silencing of Ceruloplasmin expression"/>
</dbReference>
<dbReference type="Reactome" id="R-MMU-1799339">
    <property type="pathway name" value="SRP-dependent cotranslational protein targeting to membrane"/>
</dbReference>
<dbReference type="Reactome" id="R-MMU-6791226">
    <property type="pathway name" value="Major pathway of rRNA processing in the nucleolus and cytosol"/>
</dbReference>
<dbReference type="Reactome" id="R-MMU-72649">
    <property type="pathway name" value="Translation initiation complex formation"/>
</dbReference>
<dbReference type="Reactome" id="R-MMU-72689">
    <property type="pathway name" value="Formation of a pool of free 40S subunits"/>
</dbReference>
<dbReference type="Reactome" id="R-MMU-72695">
    <property type="pathway name" value="Formation of the ternary complex, and subsequently, the 43S complex"/>
</dbReference>
<dbReference type="Reactome" id="R-MMU-72702">
    <property type="pathway name" value="Ribosomal scanning and start codon recognition"/>
</dbReference>
<dbReference type="Reactome" id="R-MMU-72706">
    <property type="pathway name" value="GTP hydrolysis and joining of the 60S ribosomal subunit"/>
</dbReference>
<dbReference type="Reactome" id="R-MMU-975956">
    <property type="pathway name" value="Nonsense Mediated Decay (NMD) independent of the Exon Junction Complex (EJC)"/>
</dbReference>
<dbReference type="Reactome" id="R-MMU-975957">
    <property type="pathway name" value="Nonsense Mediated Decay (NMD) enhanced by the Exon Junction Complex (EJC)"/>
</dbReference>
<dbReference type="BioGRID-ORCS" id="67941">
    <property type="hits" value="11 hits in 114 CRISPR screens"/>
</dbReference>
<dbReference type="ChiTaRS" id="Rps27l">
    <property type="organism name" value="mouse"/>
</dbReference>
<dbReference type="PRO" id="PR:Q6ZWY3"/>
<dbReference type="Proteomes" id="UP000000589">
    <property type="component" value="Chromosome 9"/>
</dbReference>
<dbReference type="RNAct" id="Q6ZWY3">
    <property type="molecule type" value="protein"/>
</dbReference>
<dbReference type="Bgee" id="ENSMUSG00000036781">
    <property type="expression patterns" value="Expressed in epiblast cell in embryo and 272 other cell types or tissues"/>
</dbReference>
<dbReference type="ExpressionAtlas" id="Q6ZWY3">
    <property type="expression patterns" value="baseline and differential"/>
</dbReference>
<dbReference type="GO" id="GO:0005829">
    <property type="term" value="C:cytosol"/>
    <property type="evidence" value="ECO:0000304"/>
    <property type="project" value="Reactome"/>
</dbReference>
<dbReference type="GO" id="GO:0005634">
    <property type="term" value="C:nucleus"/>
    <property type="evidence" value="ECO:0007669"/>
    <property type="project" value="Ensembl"/>
</dbReference>
<dbReference type="GO" id="GO:1990904">
    <property type="term" value="C:ribonucleoprotein complex"/>
    <property type="evidence" value="ECO:0007669"/>
    <property type="project" value="UniProtKB-KW"/>
</dbReference>
<dbReference type="GO" id="GO:0005840">
    <property type="term" value="C:ribosome"/>
    <property type="evidence" value="ECO:0007669"/>
    <property type="project" value="UniProtKB-KW"/>
</dbReference>
<dbReference type="GO" id="GO:0003735">
    <property type="term" value="F:structural constituent of ribosome"/>
    <property type="evidence" value="ECO:0007669"/>
    <property type="project" value="InterPro"/>
</dbReference>
<dbReference type="GO" id="GO:0008494">
    <property type="term" value="F:translation activator activity"/>
    <property type="evidence" value="ECO:0007669"/>
    <property type="project" value="Ensembl"/>
</dbReference>
<dbReference type="GO" id="GO:0008270">
    <property type="term" value="F:zinc ion binding"/>
    <property type="evidence" value="ECO:0007669"/>
    <property type="project" value="UniProtKB-KW"/>
</dbReference>
<dbReference type="GO" id="GO:0030330">
    <property type="term" value="P:DNA damage response, signal transduction by p53 class mediator"/>
    <property type="evidence" value="ECO:0007669"/>
    <property type="project" value="Ensembl"/>
</dbReference>
<dbReference type="GO" id="GO:0042771">
    <property type="term" value="P:intrinsic apoptotic signaling pathway in response to DNA damage by p53 class mediator"/>
    <property type="evidence" value="ECO:0007669"/>
    <property type="project" value="Ensembl"/>
</dbReference>
<dbReference type="GO" id="GO:0031571">
    <property type="term" value="P:mitotic G1 DNA damage checkpoint signaling"/>
    <property type="evidence" value="ECO:0007669"/>
    <property type="project" value="Ensembl"/>
</dbReference>
<dbReference type="GO" id="GO:0006412">
    <property type="term" value="P:translation"/>
    <property type="evidence" value="ECO:0007669"/>
    <property type="project" value="InterPro"/>
</dbReference>
<dbReference type="FunFam" id="2.20.25.100:FF:000001">
    <property type="entry name" value="40S ribosomal protein S27"/>
    <property type="match status" value="1"/>
</dbReference>
<dbReference type="Gene3D" id="2.20.25.100">
    <property type="entry name" value="Zn-binding ribosomal proteins"/>
    <property type="match status" value="1"/>
</dbReference>
<dbReference type="HAMAP" id="MF_00371">
    <property type="entry name" value="Ribosomal_eS27"/>
    <property type="match status" value="1"/>
</dbReference>
<dbReference type="InterPro" id="IPR000592">
    <property type="entry name" value="Ribosomal_eS27"/>
</dbReference>
<dbReference type="InterPro" id="IPR023407">
    <property type="entry name" value="Ribosomal_eS27_Zn-bd_dom_sf"/>
</dbReference>
<dbReference type="InterPro" id="IPR011332">
    <property type="entry name" value="Ribosomal_zn-bd"/>
</dbReference>
<dbReference type="PANTHER" id="PTHR11594">
    <property type="entry name" value="40S RIBOSOMAL PROTEIN S27"/>
    <property type="match status" value="1"/>
</dbReference>
<dbReference type="Pfam" id="PF01667">
    <property type="entry name" value="Ribosomal_S27e"/>
    <property type="match status" value="1"/>
</dbReference>
<dbReference type="SUPFAM" id="SSF57829">
    <property type="entry name" value="Zn-binding ribosomal proteins"/>
    <property type="match status" value="1"/>
</dbReference>
<dbReference type="PROSITE" id="PS01168">
    <property type="entry name" value="RIBOSOMAL_S27E"/>
    <property type="match status" value="1"/>
</dbReference>
<comment type="cofactor">
    <cofactor evidence="3">
        <name>Zn(2+)</name>
        <dbReference type="ChEBI" id="CHEBI:29105"/>
    </cofactor>
    <text evidence="3">Binds 1 zinc ion per subunit.</text>
</comment>
<comment type="similarity">
    <text evidence="3">Belongs to the eukaryotic ribosomal protein eS27 family.</text>
</comment>
<evidence type="ECO:0000255" key="1"/>
<evidence type="ECO:0000256" key="2">
    <source>
        <dbReference type="SAM" id="MobiDB-lite"/>
    </source>
</evidence>
<evidence type="ECO:0000305" key="3"/>
<evidence type="ECO:0000312" key="4">
    <source>
        <dbReference type="EMBL" id="AAH58115.1"/>
    </source>
</evidence>
<evidence type="ECO:0000312" key="5">
    <source>
        <dbReference type="MGI" id="MGI:1915191"/>
    </source>
</evidence>
<gene>
    <name evidence="5" type="primary">Rps27l</name>
</gene>
<sequence length="84" mass="9477">MPLARDLLHPSLEEEKKKHKKKRLVQSPNSYFMDVKCPGCYKITTVFSHAQTVVLCVGCSTVLCQPTGGKARLTEGCSFRRKQH</sequence>
<proteinExistence type="evidence at protein level"/>
<name>RS27L_MOUSE</name>
<protein>
    <recommendedName>
        <fullName evidence="3">Small ribosomal subunit protein eS27-like</fullName>
    </recommendedName>
    <alternativeName>
        <fullName>40S ribosomal protein S27-like</fullName>
    </alternativeName>
</protein>
<accession>Q6ZWY3</accession>
<accession>Q3UB68</accession>
<keyword id="KW-0002">3D-structure</keyword>
<keyword id="KW-0479">Metal-binding</keyword>
<keyword id="KW-1185">Reference proteome</keyword>
<keyword id="KW-0687">Ribonucleoprotein</keyword>
<keyword id="KW-0689">Ribosomal protein</keyword>
<keyword id="KW-0862">Zinc</keyword>
<keyword id="KW-0863">Zinc-finger</keyword>
<reference key="1">
    <citation type="journal article" date="2005" name="Science">
        <title>The transcriptional landscape of the mammalian genome.</title>
        <authorList>
            <person name="Carninci P."/>
            <person name="Kasukawa T."/>
            <person name="Katayama S."/>
            <person name="Gough J."/>
            <person name="Frith M.C."/>
            <person name="Maeda N."/>
            <person name="Oyama R."/>
            <person name="Ravasi T."/>
            <person name="Lenhard B."/>
            <person name="Wells C."/>
            <person name="Kodzius R."/>
            <person name="Shimokawa K."/>
            <person name="Bajic V.B."/>
            <person name="Brenner S.E."/>
            <person name="Batalov S."/>
            <person name="Forrest A.R."/>
            <person name="Zavolan M."/>
            <person name="Davis M.J."/>
            <person name="Wilming L.G."/>
            <person name="Aidinis V."/>
            <person name="Allen J.E."/>
            <person name="Ambesi-Impiombato A."/>
            <person name="Apweiler R."/>
            <person name="Aturaliya R.N."/>
            <person name="Bailey T.L."/>
            <person name="Bansal M."/>
            <person name="Baxter L."/>
            <person name="Beisel K.W."/>
            <person name="Bersano T."/>
            <person name="Bono H."/>
            <person name="Chalk A.M."/>
            <person name="Chiu K.P."/>
            <person name="Choudhary V."/>
            <person name="Christoffels A."/>
            <person name="Clutterbuck D.R."/>
            <person name="Crowe M.L."/>
            <person name="Dalla E."/>
            <person name="Dalrymple B.P."/>
            <person name="de Bono B."/>
            <person name="Della Gatta G."/>
            <person name="di Bernardo D."/>
            <person name="Down T."/>
            <person name="Engstrom P."/>
            <person name="Fagiolini M."/>
            <person name="Faulkner G."/>
            <person name="Fletcher C.F."/>
            <person name="Fukushima T."/>
            <person name="Furuno M."/>
            <person name="Futaki S."/>
            <person name="Gariboldi M."/>
            <person name="Georgii-Hemming P."/>
            <person name="Gingeras T.R."/>
            <person name="Gojobori T."/>
            <person name="Green R.E."/>
            <person name="Gustincich S."/>
            <person name="Harbers M."/>
            <person name="Hayashi Y."/>
            <person name="Hensch T.K."/>
            <person name="Hirokawa N."/>
            <person name="Hill D."/>
            <person name="Huminiecki L."/>
            <person name="Iacono M."/>
            <person name="Ikeo K."/>
            <person name="Iwama A."/>
            <person name="Ishikawa T."/>
            <person name="Jakt M."/>
            <person name="Kanapin A."/>
            <person name="Katoh M."/>
            <person name="Kawasawa Y."/>
            <person name="Kelso J."/>
            <person name="Kitamura H."/>
            <person name="Kitano H."/>
            <person name="Kollias G."/>
            <person name="Krishnan S.P."/>
            <person name="Kruger A."/>
            <person name="Kummerfeld S.K."/>
            <person name="Kurochkin I.V."/>
            <person name="Lareau L.F."/>
            <person name="Lazarevic D."/>
            <person name="Lipovich L."/>
            <person name="Liu J."/>
            <person name="Liuni S."/>
            <person name="McWilliam S."/>
            <person name="Madan Babu M."/>
            <person name="Madera M."/>
            <person name="Marchionni L."/>
            <person name="Matsuda H."/>
            <person name="Matsuzawa S."/>
            <person name="Miki H."/>
            <person name="Mignone F."/>
            <person name="Miyake S."/>
            <person name="Morris K."/>
            <person name="Mottagui-Tabar S."/>
            <person name="Mulder N."/>
            <person name="Nakano N."/>
            <person name="Nakauchi H."/>
            <person name="Ng P."/>
            <person name="Nilsson R."/>
            <person name="Nishiguchi S."/>
            <person name="Nishikawa S."/>
            <person name="Nori F."/>
            <person name="Ohara O."/>
            <person name="Okazaki Y."/>
            <person name="Orlando V."/>
            <person name="Pang K.C."/>
            <person name="Pavan W.J."/>
            <person name="Pavesi G."/>
            <person name="Pesole G."/>
            <person name="Petrovsky N."/>
            <person name="Piazza S."/>
            <person name="Reed J."/>
            <person name="Reid J.F."/>
            <person name="Ring B.Z."/>
            <person name="Ringwald M."/>
            <person name="Rost B."/>
            <person name="Ruan Y."/>
            <person name="Salzberg S.L."/>
            <person name="Sandelin A."/>
            <person name="Schneider C."/>
            <person name="Schoenbach C."/>
            <person name="Sekiguchi K."/>
            <person name="Semple C.A."/>
            <person name="Seno S."/>
            <person name="Sessa L."/>
            <person name="Sheng Y."/>
            <person name="Shibata Y."/>
            <person name="Shimada H."/>
            <person name="Shimada K."/>
            <person name="Silva D."/>
            <person name="Sinclair B."/>
            <person name="Sperling S."/>
            <person name="Stupka E."/>
            <person name="Sugiura K."/>
            <person name="Sultana R."/>
            <person name="Takenaka Y."/>
            <person name="Taki K."/>
            <person name="Tammoja K."/>
            <person name="Tan S.L."/>
            <person name="Tang S."/>
            <person name="Taylor M.S."/>
            <person name="Tegner J."/>
            <person name="Teichmann S.A."/>
            <person name="Ueda H.R."/>
            <person name="van Nimwegen E."/>
            <person name="Verardo R."/>
            <person name="Wei C.L."/>
            <person name="Yagi K."/>
            <person name="Yamanishi H."/>
            <person name="Zabarovsky E."/>
            <person name="Zhu S."/>
            <person name="Zimmer A."/>
            <person name="Hide W."/>
            <person name="Bult C."/>
            <person name="Grimmond S.M."/>
            <person name="Teasdale R.D."/>
            <person name="Liu E.T."/>
            <person name="Brusic V."/>
            <person name="Quackenbush J."/>
            <person name="Wahlestedt C."/>
            <person name="Mattick J.S."/>
            <person name="Hume D.A."/>
            <person name="Kai C."/>
            <person name="Sasaki D."/>
            <person name="Tomaru Y."/>
            <person name="Fukuda S."/>
            <person name="Kanamori-Katayama M."/>
            <person name="Suzuki M."/>
            <person name="Aoki J."/>
            <person name="Arakawa T."/>
            <person name="Iida J."/>
            <person name="Imamura K."/>
            <person name="Itoh M."/>
            <person name="Kato T."/>
            <person name="Kawaji H."/>
            <person name="Kawagashira N."/>
            <person name="Kawashima T."/>
            <person name="Kojima M."/>
            <person name="Kondo S."/>
            <person name="Konno H."/>
            <person name="Nakano K."/>
            <person name="Ninomiya N."/>
            <person name="Nishio T."/>
            <person name="Okada M."/>
            <person name="Plessy C."/>
            <person name="Shibata K."/>
            <person name="Shiraki T."/>
            <person name="Suzuki S."/>
            <person name="Tagami M."/>
            <person name="Waki K."/>
            <person name="Watahiki A."/>
            <person name="Okamura-Oho Y."/>
            <person name="Suzuki H."/>
            <person name="Kawai J."/>
            <person name="Hayashizaki Y."/>
        </authorList>
    </citation>
    <scope>NUCLEOTIDE SEQUENCE [LARGE SCALE MRNA]</scope>
    <source>
        <strain>C57BL/6J</strain>
        <tissue>Bone marrow</tissue>
        <tissue>Pancreas</tissue>
    </source>
</reference>
<reference evidence="4" key="2">
    <citation type="journal article" date="2004" name="Genome Res.">
        <title>The status, quality, and expansion of the NIH full-length cDNA project: the Mammalian Gene Collection (MGC).</title>
        <authorList>
            <consortium name="The MGC Project Team"/>
        </authorList>
    </citation>
    <scope>NUCLEOTIDE SEQUENCE [LARGE SCALE MRNA]</scope>
    <source>
        <strain evidence="4">C57BL/6J</strain>
        <tissue evidence="4">Brain</tissue>
    </source>
</reference>
<reference key="3">
    <citation type="journal article" date="2010" name="Cell">
        <title>A tissue-specific atlas of mouse protein phosphorylation and expression.</title>
        <authorList>
            <person name="Huttlin E.L."/>
            <person name="Jedrychowski M.P."/>
            <person name="Elias J.E."/>
            <person name="Goswami T."/>
            <person name="Rad R."/>
            <person name="Beausoleil S.A."/>
            <person name="Villen J."/>
            <person name="Haas W."/>
            <person name="Sowa M.E."/>
            <person name="Gygi S.P."/>
        </authorList>
    </citation>
    <scope>IDENTIFICATION BY MASS SPECTROMETRY [LARGE SCALE ANALYSIS]</scope>
    <source>
        <tissue>Kidney</tissue>
        <tissue>Liver</tissue>
        <tissue>Pancreas</tissue>
        <tissue>Spleen</tissue>
    </source>
</reference>
<feature type="chain" id="PRO_0000149055" description="Small ribosomal subunit protein eS27-like">
    <location>
        <begin position="1"/>
        <end position="84"/>
    </location>
</feature>
<feature type="zinc finger region" description="C4-type" evidence="1">
    <location>
        <begin position="38"/>
        <end position="60"/>
    </location>
</feature>
<feature type="region of interest" description="Disordered" evidence="2">
    <location>
        <begin position="1"/>
        <end position="23"/>
    </location>
</feature>
<feature type="compositionally biased region" description="Basic and acidic residues" evidence="2">
    <location>
        <begin position="1"/>
        <end position="16"/>
    </location>
</feature>
<organism>
    <name type="scientific">Mus musculus</name>
    <name type="common">Mouse</name>
    <dbReference type="NCBI Taxonomy" id="10090"/>
    <lineage>
        <taxon>Eukaryota</taxon>
        <taxon>Metazoa</taxon>
        <taxon>Chordata</taxon>
        <taxon>Craniata</taxon>
        <taxon>Vertebrata</taxon>
        <taxon>Euteleostomi</taxon>
        <taxon>Mammalia</taxon>
        <taxon>Eutheria</taxon>
        <taxon>Euarchontoglires</taxon>
        <taxon>Glires</taxon>
        <taxon>Rodentia</taxon>
        <taxon>Myomorpha</taxon>
        <taxon>Muroidea</taxon>
        <taxon>Muridae</taxon>
        <taxon>Murinae</taxon>
        <taxon>Mus</taxon>
        <taxon>Mus</taxon>
    </lineage>
</organism>